<name>MEND_YERPB</name>
<keyword id="KW-0460">Magnesium</keyword>
<keyword id="KW-0464">Manganese</keyword>
<keyword id="KW-0474">Menaquinone biosynthesis</keyword>
<keyword id="KW-0479">Metal-binding</keyword>
<keyword id="KW-0786">Thiamine pyrophosphate</keyword>
<keyword id="KW-0808">Transferase</keyword>
<sequence length="567" mass="61844">MSTSVFNRRWAALLLEALTRHGVRHICIAPGSRSTPLTLAAAANPSLVCHTHFDERGLGHLALGLAKASTEPVAVIVTSGTAVANLYPALIEAGLTGERLILLTADRPPELIDCGANQAIRQQGLFASHPTLSVNLPRPTPDISARWLVSTLDSAMAQLQHGALHINCPFAEPLYGGDEQQYADWSASLGDWWQDCHPWLRQTCYPPSLYQPLAQQADWFFWRQKRGVVIAGRMGAEEGRQLTAWAAMLGWPLIGDVLSQTGQPLPCADLWLAHPRAQETLAQAQIVLQFGSSLTSKRLLQWQTACQPQEYWLVDSAPGRLDPANHRGRRIICPVGEWLSRHPAQRRTPWATELAAYSESAQAQVIETLSGQFSEAAVAHQLAELLPDNGQLFVGNSLIVRLIDALGQLPAGYPVYSNRGASGIDGLLSTAAGVQRATAKPTLAIVGDLSALYDLNALALLRQSSAPMVLLVINNNGGQIFSLLPTPEAERQRFYCMPQDVNFEHAAVMFSLGYARPNSWPQLREHVHQCWLRGGTTLIEVQVPPSQGAETLQQLVQQVTLIPQVAP</sequence>
<accession>B2K7Z3</accession>
<comment type="function">
    <text evidence="1">Catalyzes the thiamine diphosphate-dependent decarboxylation of 2-oxoglutarate and the subsequent addition of the resulting succinic semialdehyde-thiamine pyrophosphate anion to isochorismate to yield 2-succinyl-5-enolpyruvyl-6-hydroxy-3-cyclohexene-1-carboxylate (SEPHCHC).</text>
</comment>
<comment type="catalytic activity">
    <reaction evidence="1">
        <text>isochorismate + 2-oxoglutarate + H(+) = 5-enolpyruvoyl-6-hydroxy-2-succinyl-cyclohex-3-ene-1-carboxylate + CO2</text>
        <dbReference type="Rhea" id="RHEA:25593"/>
        <dbReference type="ChEBI" id="CHEBI:15378"/>
        <dbReference type="ChEBI" id="CHEBI:16526"/>
        <dbReference type="ChEBI" id="CHEBI:16810"/>
        <dbReference type="ChEBI" id="CHEBI:29780"/>
        <dbReference type="ChEBI" id="CHEBI:58818"/>
        <dbReference type="EC" id="2.2.1.9"/>
    </reaction>
</comment>
<comment type="cofactor">
    <cofactor evidence="1">
        <name>Mg(2+)</name>
        <dbReference type="ChEBI" id="CHEBI:18420"/>
    </cofactor>
    <cofactor evidence="1">
        <name>Mn(2+)</name>
        <dbReference type="ChEBI" id="CHEBI:29035"/>
    </cofactor>
</comment>
<comment type="cofactor">
    <cofactor evidence="1">
        <name>thiamine diphosphate</name>
        <dbReference type="ChEBI" id="CHEBI:58937"/>
    </cofactor>
    <text evidence="1">Binds 1 thiamine pyrophosphate per subunit.</text>
</comment>
<comment type="pathway">
    <text evidence="1">Quinol/quinone metabolism; 1,4-dihydroxy-2-naphthoate biosynthesis; 1,4-dihydroxy-2-naphthoate from chorismate: step 2/7.</text>
</comment>
<comment type="pathway">
    <text evidence="1">Quinol/quinone metabolism; menaquinone biosynthesis.</text>
</comment>
<comment type="subunit">
    <text evidence="1">Homodimer.</text>
</comment>
<comment type="similarity">
    <text evidence="1">Belongs to the TPP enzyme family. MenD subfamily.</text>
</comment>
<dbReference type="EC" id="2.2.1.9" evidence="1"/>
<dbReference type="EMBL" id="CP001048">
    <property type="protein sequence ID" value="ACC89614.1"/>
    <property type="molecule type" value="Genomic_DNA"/>
</dbReference>
<dbReference type="RefSeq" id="WP_012413805.1">
    <property type="nucleotide sequence ID" value="NZ_CP009780.1"/>
</dbReference>
<dbReference type="SMR" id="B2K7Z3"/>
<dbReference type="KEGG" id="ypb:YPTS_2654"/>
<dbReference type="PATRIC" id="fig|502801.10.peg.2070"/>
<dbReference type="UniPathway" id="UPA00079"/>
<dbReference type="UniPathway" id="UPA01057">
    <property type="reaction ID" value="UER00164"/>
</dbReference>
<dbReference type="GO" id="GO:0070204">
    <property type="term" value="F:2-succinyl-5-enolpyruvyl-6-hydroxy-3-cyclohexene-1-carboxylic-acid synthase activity"/>
    <property type="evidence" value="ECO:0007669"/>
    <property type="project" value="UniProtKB-UniRule"/>
</dbReference>
<dbReference type="GO" id="GO:0000287">
    <property type="term" value="F:magnesium ion binding"/>
    <property type="evidence" value="ECO:0007669"/>
    <property type="project" value="UniProtKB-UniRule"/>
</dbReference>
<dbReference type="GO" id="GO:0030145">
    <property type="term" value="F:manganese ion binding"/>
    <property type="evidence" value="ECO:0007669"/>
    <property type="project" value="UniProtKB-UniRule"/>
</dbReference>
<dbReference type="GO" id="GO:0030976">
    <property type="term" value="F:thiamine pyrophosphate binding"/>
    <property type="evidence" value="ECO:0007669"/>
    <property type="project" value="UniProtKB-UniRule"/>
</dbReference>
<dbReference type="GO" id="GO:0009234">
    <property type="term" value="P:menaquinone biosynthetic process"/>
    <property type="evidence" value="ECO:0007669"/>
    <property type="project" value="UniProtKB-UniRule"/>
</dbReference>
<dbReference type="CDD" id="cd07037">
    <property type="entry name" value="TPP_PYR_MenD"/>
    <property type="match status" value="1"/>
</dbReference>
<dbReference type="CDD" id="cd02009">
    <property type="entry name" value="TPP_SHCHC_synthase"/>
    <property type="match status" value="1"/>
</dbReference>
<dbReference type="FunFam" id="3.40.50.970:FF:000029">
    <property type="entry name" value="2-succinyl-5-enolpyruvyl-6-hydroxy-3-cyclohexene-1-carboxylate synthase"/>
    <property type="match status" value="1"/>
</dbReference>
<dbReference type="Gene3D" id="3.40.50.970">
    <property type="match status" value="2"/>
</dbReference>
<dbReference type="Gene3D" id="3.40.50.1220">
    <property type="entry name" value="TPP-binding domain"/>
    <property type="match status" value="1"/>
</dbReference>
<dbReference type="HAMAP" id="MF_01659">
    <property type="entry name" value="MenD"/>
    <property type="match status" value="1"/>
</dbReference>
<dbReference type="InterPro" id="IPR004433">
    <property type="entry name" value="MenaQ_synth_MenD"/>
</dbReference>
<dbReference type="InterPro" id="IPR032264">
    <property type="entry name" value="MenD_middle"/>
</dbReference>
<dbReference type="InterPro" id="IPR029061">
    <property type="entry name" value="THDP-binding"/>
</dbReference>
<dbReference type="InterPro" id="IPR012001">
    <property type="entry name" value="Thiamin_PyroP_enz_TPP-bd_dom"/>
</dbReference>
<dbReference type="InterPro" id="IPR011766">
    <property type="entry name" value="TPP_enzyme_TPP-bd"/>
</dbReference>
<dbReference type="NCBIfam" id="TIGR00173">
    <property type="entry name" value="menD"/>
    <property type="match status" value="1"/>
</dbReference>
<dbReference type="PANTHER" id="PTHR42916">
    <property type="entry name" value="2-SUCCINYL-5-ENOLPYRUVYL-6-HYDROXY-3-CYCLOHEXENE-1-CARBOXYLATE SYNTHASE"/>
    <property type="match status" value="1"/>
</dbReference>
<dbReference type="PANTHER" id="PTHR42916:SF1">
    <property type="entry name" value="PROTEIN PHYLLO, CHLOROPLASTIC"/>
    <property type="match status" value="1"/>
</dbReference>
<dbReference type="Pfam" id="PF02775">
    <property type="entry name" value="TPP_enzyme_C"/>
    <property type="match status" value="1"/>
</dbReference>
<dbReference type="Pfam" id="PF16582">
    <property type="entry name" value="TPP_enzyme_M_2"/>
    <property type="match status" value="1"/>
</dbReference>
<dbReference type="Pfam" id="PF02776">
    <property type="entry name" value="TPP_enzyme_N"/>
    <property type="match status" value="1"/>
</dbReference>
<dbReference type="PIRSF" id="PIRSF004983">
    <property type="entry name" value="MenD"/>
    <property type="match status" value="1"/>
</dbReference>
<dbReference type="SUPFAM" id="SSF52518">
    <property type="entry name" value="Thiamin diphosphate-binding fold (THDP-binding)"/>
    <property type="match status" value="2"/>
</dbReference>
<organism>
    <name type="scientific">Yersinia pseudotuberculosis serotype IB (strain PB1/+)</name>
    <dbReference type="NCBI Taxonomy" id="502801"/>
    <lineage>
        <taxon>Bacteria</taxon>
        <taxon>Pseudomonadati</taxon>
        <taxon>Pseudomonadota</taxon>
        <taxon>Gammaproteobacteria</taxon>
        <taxon>Enterobacterales</taxon>
        <taxon>Yersiniaceae</taxon>
        <taxon>Yersinia</taxon>
    </lineage>
</organism>
<reference key="1">
    <citation type="submission" date="2008-04" db="EMBL/GenBank/DDBJ databases">
        <title>Complete sequence of Yersinia pseudotuberculosis PB1/+.</title>
        <authorList>
            <person name="Copeland A."/>
            <person name="Lucas S."/>
            <person name="Lapidus A."/>
            <person name="Glavina del Rio T."/>
            <person name="Dalin E."/>
            <person name="Tice H."/>
            <person name="Bruce D."/>
            <person name="Goodwin L."/>
            <person name="Pitluck S."/>
            <person name="Munk A.C."/>
            <person name="Brettin T."/>
            <person name="Detter J.C."/>
            <person name="Han C."/>
            <person name="Tapia R."/>
            <person name="Schmutz J."/>
            <person name="Larimer F."/>
            <person name="Land M."/>
            <person name="Hauser L."/>
            <person name="Challacombe J.F."/>
            <person name="Green L."/>
            <person name="Lindler L.E."/>
            <person name="Nikolich M.P."/>
            <person name="Richardson P."/>
        </authorList>
    </citation>
    <scope>NUCLEOTIDE SEQUENCE [LARGE SCALE GENOMIC DNA]</scope>
    <source>
        <strain>PB1/+</strain>
    </source>
</reference>
<protein>
    <recommendedName>
        <fullName evidence="1">2-succinyl-5-enolpyruvyl-6-hydroxy-3-cyclohexene-1-carboxylate synthase</fullName>
        <shortName evidence="1">SEPHCHC synthase</shortName>
        <ecNumber evidence="1">2.2.1.9</ecNumber>
    </recommendedName>
    <alternativeName>
        <fullName evidence="1">Menaquinone biosynthesis protein MenD</fullName>
    </alternativeName>
</protein>
<evidence type="ECO:0000255" key="1">
    <source>
        <dbReference type="HAMAP-Rule" id="MF_01659"/>
    </source>
</evidence>
<proteinExistence type="inferred from homology"/>
<gene>
    <name evidence="1" type="primary">menD</name>
    <name type="ordered locus">YPTS_2654</name>
</gene>
<feature type="chain" id="PRO_1000187101" description="2-succinyl-5-enolpyruvyl-6-hydroxy-3-cyclohexene-1-carboxylate synthase">
    <location>
        <begin position="1"/>
        <end position="567"/>
    </location>
</feature>